<gene>
    <name type="ordered locus">BQ2027_MB1430</name>
</gene>
<evidence type="ECO:0000255" key="1">
    <source>
        <dbReference type="PROSITE-ProRule" id="PRU00593"/>
    </source>
</evidence>
<accession>P68912</accession>
<accession>A0A1R3Y0D0</accession>
<accession>P71663</accession>
<accession>X2BHZ0</accession>
<protein>
    <recommendedName>
        <fullName>Uncharacterized HTH-type transcriptional regulator Mb1430</fullName>
    </recommendedName>
</protein>
<sequence length="344" mass="37894">MGHLPPPAEVRHPVYATRVLCEVANERGVPTADVLAGTAIEPADLDDPDAVVGALDEITAVRRLLARLPDDAGIGIDVGSRFALTHFGLFGFAVMSCGTLRELLTIAMRYFALTTMHVDITLFETADDCLVELDASHLPADVRGFFIERDIAGIIATTTSFALPLAAKYADQVSAELAVDAELLRPLLELVPVHDVAFGRAHNRVHFPRAMFDEPLPQADRHTLEMCIAQCDVLMQRNERRRGITALVRSKLFRDSGLFPTFTDVAGELDMHPRTLRRRLAEEGTSFRALLGEARSTVAVDLLRNVGLTVQQVSTRLGYTEVSTFSHAFKRWYGVAPSEYSRRG</sequence>
<reference key="1">
    <citation type="journal article" date="2003" name="Proc. Natl. Acad. Sci. U.S.A.">
        <title>The complete genome sequence of Mycobacterium bovis.</title>
        <authorList>
            <person name="Garnier T."/>
            <person name="Eiglmeier K."/>
            <person name="Camus J.-C."/>
            <person name="Medina N."/>
            <person name="Mansoor H."/>
            <person name="Pryor M."/>
            <person name="Duthoy S."/>
            <person name="Grondin S."/>
            <person name="Lacroix C."/>
            <person name="Monsempe C."/>
            <person name="Simon S."/>
            <person name="Harris B."/>
            <person name="Atkin R."/>
            <person name="Doggett J."/>
            <person name="Mayes R."/>
            <person name="Keating L."/>
            <person name="Wheeler P.R."/>
            <person name="Parkhill J."/>
            <person name="Barrell B.G."/>
            <person name="Cole S.T."/>
            <person name="Gordon S.V."/>
            <person name="Hewinson R.G."/>
        </authorList>
    </citation>
    <scope>NUCLEOTIDE SEQUENCE [LARGE SCALE GENOMIC DNA]</scope>
    <source>
        <strain>ATCC BAA-935 / AF2122/97</strain>
    </source>
</reference>
<reference key="2">
    <citation type="journal article" date="2017" name="Genome Announc.">
        <title>Updated reference genome sequence and annotation of Mycobacterium bovis AF2122/97.</title>
        <authorList>
            <person name="Malone K.M."/>
            <person name="Farrell D."/>
            <person name="Stuber T.P."/>
            <person name="Schubert O.T."/>
            <person name="Aebersold R."/>
            <person name="Robbe-Austerman S."/>
            <person name="Gordon S.V."/>
        </authorList>
    </citation>
    <scope>NUCLEOTIDE SEQUENCE [LARGE SCALE GENOMIC DNA]</scope>
    <scope>GENOME REANNOTATION</scope>
    <source>
        <strain>ATCC BAA-935 / AF2122/97</strain>
    </source>
</reference>
<dbReference type="EMBL" id="LT708304">
    <property type="protein sequence ID" value="SIU00033.1"/>
    <property type="molecule type" value="Genomic_DNA"/>
</dbReference>
<dbReference type="RefSeq" id="NP_855082.1">
    <property type="nucleotide sequence ID" value="NC_002945.3"/>
</dbReference>
<dbReference type="RefSeq" id="WP_003407264.1">
    <property type="nucleotide sequence ID" value="NC_002945.4"/>
</dbReference>
<dbReference type="SMR" id="P68912"/>
<dbReference type="KEGG" id="mbo:BQ2027_MB1430"/>
<dbReference type="PATRIC" id="fig|233413.5.peg.1565"/>
<dbReference type="Proteomes" id="UP000001419">
    <property type="component" value="Chromosome"/>
</dbReference>
<dbReference type="GO" id="GO:0005829">
    <property type="term" value="C:cytosol"/>
    <property type="evidence" value="ECO:0007669"/>
    <property type="project" value="TreeGrafter"/>
</dbReference>
<dbReference type="GO" id="GO:0003700">
    <property type="term" value="F:DNA-binding transcription factor activity"/>
    <property type="evidence" value="ECO:0007669"/>
    <property type="project" value="InterPro"/>
</dbReference>
<dbReference type="GO" id="GO:0000976">
    <property type="term" value="F:transcription cis-regulatory region binding"/>
    <property type="evidence" value="ECO:0007669"/>
    <property type="project" value="TreeGrafter"/>
</dbReference>
<dbReference type="Gene3D" id="1.10.10.60">
    <property type="entry name" value="Homeodomain-like"/>
    <property type="match status" value="1"/>
</dbReference>
<dbReference type="InterPro" id="IPR032687">
    <property type="entry name" value="AraC-type_N"/>
</dbReference>
<dbReference type="InterPro" id="IPR009057">
    <property type="entry name" value="Homeodomain-like_sf"/>
</dbReference>
<dbReference type="InterPro" id="IPR018060">
    <property type="entry name" value="HTH_AraC"/>
</dbReference>
<dbReference type="InterPro" id="IPR020449">
    <property type="entry name" value="Tscrpt_reg_AraC-type_HTH"/>
</dbReference>
<dbReference type="PANTHER" id="PTHR47894">
    <property type="entry name" value="HTH-TYPE TRANSCRIPTIONAL REGULATOR GADX"/>
    <property type="match status" value="1"/>
</dbReference>
<dbReference type="PANTHER" id="PTHR47894:SF1">
    <property type="entry name" value="HTH-TYPE TRANSCRIPTIONAL REGULATOR VQSM"/>
    <property type="match status" value="1"/>
</dbReference>
<dbReference type="Pfam" id="PF12625">
    <property type="entry name" value="Arabinose_bd"/>
    <property type="match status" value="1"/>
</dbReference>
<dbReference type="Pfam" id="PF12833">
    <property type="entry name" value="HTH_18"/>
    <property type="match status" value="1"/>
</dbReference>
<dbReference type="PRINTS" id="PR00032">
    <property type="entry name" value="HTHARAC"/>
</dbReference>
<dbReference type="SMART" id="SM00342">
    <property type="entry name" value="HTH_ARAC"/>
    <property type="match status" value="1"/>
</dbReference>
<dbReference type="SUPFAM" id="SSF46689">
    <property type="entry name" value="Homeodomain-like"/>
    <property type="match status" value="1"/>
</dbReference>
<dbReference type="PROSITE" id="PS01124">
    <property type="entry name" value="HTH_ARAC_FAMILY_2"/>
    <property type="match status" value="1"/>
</dbReference>
<name>Y1430_MYCBO</name>
<proteinExistence type="predicted"/>
<keyword id="KW-0238">DNA-binding</keyword>
<keyword id="KW-1185">Reference proteome</keyword>
<keyword id="KW-0804">Transcription</keyword>
<keyword id="KW-0805">Transcription regulation</keyword>
<feature type="chain" id="PRO_0000194623" description="Uncharacterized HTH-type transcriptional regulator Mb1430">
    <location>
        <begin position="1"/>
        <end position="344"/>
    </location>
</feature>
<feature type="domain" description="HTH araC/xylS-type" evidence="1">
    <location>
        <begin position="242"/>
        <end position="343"/>
    </location>
</feature>
<feature type="DNA-binding region" description="H-T-H motif" evidence="1">
    <location>
        <begin position="263"/>
        <end position="284"/>
    </location>
</feature>
<feature type="DNA-binding region" description="H-T-H motif" evidence="1">
    <location>
        <begin position="310"/>
        <end position="333"/>
    </location>
</feature>
<organism>
    <name type="scientific">Mycobacterium bovis (strain ATCC BAA-935 / AF2122/97)</name>
    <dbReference type="NCBI Taxonomy" id="233413"/>
    <lineage>
        <taxon>Bacteria</taxon>
        <taxon>Bacillati</taxon>
        <taxon>Actinomycetota</taxon>
        <taxon>Actinomycetes</taxon>
        <taxon>Mycobacteriales</taxon>
        <taxon>Mycobacteriaceae</taxon>
        <taxon>Mycobacterium</taxon>
        <taxon>Mycobacterium tuberculosis complex</taxon>
    </lineage>
</organism>